<sequence>MMPAKLQLDVLRTLQSSARHGTQTLKNSNFLERFHKDRIVFCLPFFPALFLVPVQKVLQHLCLRFTQVAPYFIIQLFDLPSRHAENLAPLLASCRIQYTNCFSSSSNGQVPSIISLYLRVDLSPFYAKIFQISYRVPMIWLDVFQVFFVFLVISQHSLHS</sequence>
<reference key="1">
    <citation type="journal article" date="1997" name="Nature">
        <title>The nucleotide sequence of Saccharomyces cerevisiae chromosome XII.</title>
        <authorList>
            <person name="Johnston M."/>
            <person name="Hillier L.W."/>
            <person name="Riles L."/>
            <person name="Albermann K."/>
            <person name="Andre B."/>
            <person name="Ansorge W."/>
            <person name="Benes V."/>
            <person name="Brueckner M."/>
            <person name="Delius H."/>
            <person name="Dubois E."/>
            <person name="Duesterhoeft A."/>
            <person name="Entian K.-D."/>
            <person name="Floeth M."/>
            <person name="Goffeau A."/>
            <person name="Hebling U."/>
            <person name="Heumann K."/>
            <person name="Heuss-Neitzel D."/>
            <person name="Hilbert H."/>
            <person name="Hilger F."/>
            <person name="Kleine K."/>
            <person name="Koetter P."/>
            <person name="Louis E.J."/>
            <person name="Messenguy F."/>
            <person name="Mewes H.-W."/>
            <person name="Miosga T."/>
            <person name="Moestl D."/>
            <person name="Mueller-Auer S."/>
            <person name="Nentwich U."/>
            <person name="Obermaier B."/>
            <person name="Piravandi E."/>
            <person name="Pohl T.M."/>
            <person name="Portetelle D."/>
            <person name="Purnelle B."/>
            <person name="Rechmann S."/>
            <person name="Rieger M."/>
            <person name="Rinke M."/>
            <person name="Rose M."/>
            <person name="Scharfe M."/>
            <person name="Scherens B."/>
            <person name="Scholler P."/>
            <person name="Schwager C."/>
            <person name="Schwarz S."/>
            <person name="Underwood A.P."/>
            <person name="Urrestarazu L.A."/>
            <person name="Vandenbol M."/>
            <person name="Verhasselt P."/>
            <person name="Vierendeels F."/>
            <person name="Voet M."/>
            <person name="Volckaert G."/>
            <person name="Voss H."/>
            <person name="Wambutt R."/>
            <person name="Wedler E."/>
            <person name="Wedler H."/>
            <person name="Zimmermann F.K."/>
            <person name="Zollner A."/>
            <person name="Hani J."/>
            <person name="Hoheisel J.D."/>
        </authorList>
    </citation>
    <scope>NUCLEOTIDE SEQUENCE [LARGE SCALE GENOMIC DNA]</scope>
    <source>
        <strain>ATCC 204508 / S288c</strain>
    </source>
</reference>
<reference key="2">
    <citation type="journal article" date="2014" name="G3 (Bethesda)">
        <title>The reference genome sequence of Saccharomyces cerevisiae: Then and now.</title>
        <authorList>
            <person name="Engel S.R."/>
            <person name="Dietrich F.S."/>
            <person name="Fisk D.G."/>
            <person name="Binkley G."/>
            <person name="Balakrishnan R."/>
            <person name="Costanzo M.C."/>
            <person name="Dwight S.S."/>
            <person name="Hitz B.C."/>
            <person name="Karra K."/>
            <person name="Nash R.S."/>
            <person name="Weng S."/>
            <person name="Wong E.D."/>
            <person name="Lloyd P."/>
            <person name="Skrzypek M.S."/>
            <person name="Miyasato S.R."/>
            <person name="Simison M."/>
            <person name="Cherry J.M."/>
        </authorList>
    </citation>
    <scope>GENOME REANNOTATION</scope>
    <source>
        <strain>ATCC 204508 / S288c</strain>
    </source>
</reference>
<reference key="3">
    <citation type="journal article" date="2002" name="Nat. Biotechnol.">
        <title>An integrated approach for finding overlooked genes in yeast.</title>
        <authorList>
            <person name="Kumar A."/>
            <person name="Harrison P.M."/>
            <person name="Cheung K.-H."/>
            <person name="Lan N."/>
            <person name="Echols N."/>
            <person name="Bertone P."/>
            <person name="Miller P."/>
            <person name="Gerstein M.B."/>
            <person name="Snyder M."/>
        </authorList>
    </citation>
    <scope>NUCLEOTIDE SEQUENCE [GENOMIC DNA]</scope>
</reference>
<keyword id="KW-0472">Membrane</keyword>
<keyword id="KW-0812">Transmembrane</keyword>
<keyword id="KW-1133">Transmembrane helix</keyword>
<comment type="subcellular location">
    <subcellularLocation>
        <location evidence="2">Membrane</location>
        <topology evidence="2">Multi-pass membrane protein</topology>
    </subcellularLocation>
</comment>
<comment type="miscellaneous">
    <text evidence="2">Completely overlaps YRF1-4.</text>
</comment>
<comment type="similarity">
    <text evidence="2">Belongs to the UPF0479 family.</text>
</comment>
<comment type="caution">
    <text evidence="3">Product of a dubious gene prediction unlikely to encode a functional protein. Because of that it is not part of the S.cerevisiae S288c complete/reference proteome set.</text>
</comment>
<proteinExistence type="uncertain"/>
<gene>
    <name type="ordered locus">YLR467C-A</name>
</gene>
<protein>
    <recommendedName>
        <fullName>Putative UPF0479 protein YLR467C-A</fullName>
    </recommendedName>
</protein>
<feature type="chain" id="PRO_0000406013" description="Putative UPF0479 protein YLR467C-A">
    <location>
        <begin position="1"/>
        <end position="160"/>
    </location>
</feature>
<feature type="transmembrane region" description="Helical" evidence="1">
    <location>
        <begin position="39"/>
        <end position="59"/>
    </location>
</feature>
<feature type="transmembrane region" description="Helical" evidence="1">
    <location>
        <begin position="136"/>
        <end position="156"/>
    </location>
</feature>
<accession>P0CL39</accession>
<accession>Q8TF92</accession>
<accession>Q8TGK3</accession>
<organism>
    <name type="scientific">Saccharomyces cerevisiae (strain ATCC 204508 / S288c)</name>
    <name type="common">Baker's yeast</name>
    <dbReference type="NCBI Taxonomy" id="559292"/>
    <lineage>
        <taxon>Eukaryota</taxon>
        <taxon>Fungi</taxon>
        <taxon>Dikarya</taxon>
        <taxon>Ascomycota</taxon>
        <taxon>Saccharomycotina</taxon>
        <taxon>Saccharomycetes</taxon>
        <taxon>Saccharomycetales</taxon>
        <taxon>Saccharomycetaceae</taxon>
        <taxon>Saccharomyces</taxon>
    </lineage>
</organism>
<name>YL67C_YEAST</name>
<evidence type="ECO:0000255" key="1"/>
<evidence type="ECO:0000305" key="2"/>
<evidence type="ECO:0000305" key="3">
    <source>
    </source>
</evidence>
<dbReference type="EMBL" id="Z73327">
    <property type="status" value="NOT_ANNOTATED_CDS"/>
    <property type="molecule type" value="Genomic_DNA"/>
</dbReference>
<dbReference type="EMBL" id="AF480012">
    <property type="protein sequence ID" value="AAL79325.1"/>
    <property type="molecule type" value="Genomic_DNA"/>
</dbReference>
<dbReference type="EnsemblFungi" id="YLR466C-A_mRNA">
    <property type="protein sequence ID" value="YLR466C-A"/>
    <property type="gene ID" value="YLR466C-A"/>
</dbReference>
<dbReference type="EnsemblFungi" id="YLR467C-A_mRNA">
    <property type="protein sequence ID" value="YLR467C-A"/>
    <property type="gene ID" value="YLR467C-A"/>
</dbReference>
<dbReference type="EnsemblFungi" id="YOR396C-A_mRNA">
    <property type="protein sequence ID" value="YOR396C-A"/>
    <property type="gene ID" value="YOR396C-A"/>
</dbReference>
<dbReference type="AGR" id="SGD:S000028687"/>
<dbReference type="SGD" id="S000028687">
    <property type="gene designation" value="YLR467C-A"/>
</dbReference>
<dbReference type="HOGENOM" id="CLU_139933_0_0_1"/>
<dbReference type="GO" id="GO:0016020">
    <property type="term" value="C:membrane"/>
    <property type="evidence" value="ECO:0007669"/>
    <property type="project" value="UniProtKB-SubCell"/>
</dbReference>